<dbReference type="EC" id="7.1.1.-" evidence="1"/>
<dbReference type="EMBL" id="CP000097">
    <property type="protein sequence ID" value="ABB26911.1"/>
    <property type="molecule type" value="Genomic_DNA"/>
</dbReference>
<dbReference type="SMR" id="Q3AUW5"/>
<dbReference type="STRING" id="316279.Syncc9902_1953"/>
<dbReference type="KEGG" id="sye:Syncc9902_1953"/>
<dbReference type="eggNOG" id="ENOG502ZBMI">
    <property type="taxonomic scope" value="Bacteria"/>
</dbReference>
<dbReference type="HOGENOM" id="CLU_087432_0_0_3"/>
<dbReference type="Proteomes" id="UP000002712">
    <property type="component" value="Chromosome"/>
</dbReference>
<dbReference type="GO" id="GO:0031676">
    <property type="term" value="C:plasma membrane-derived thylakoid membrane"/>
    <property type="evidence" value="ECO:0007669"/>
    <property type="project" value="UniProtKB-SubCell"/>
</dbReference>
<dbReference type="GO" id="GO:0016655">
    <property type="term" value="F:oxidoreductase activity, acting on NAD(P)H, quinone or similar compound as acceptor"/>
    <property type="evidence" value="ECO:0007669"/>
    <property type="project" value="UniProtKB-UniRule"/>
</dbReference>
<dbReference type="GO" id="GO:0048038">
    <property type="term" value="F:quinone binding"/>
    <property type="evidence" value="ECO:0007669"/>
    <property type="project" value="UniProtKB-KW"/>
</dbReference>
<dbReference type="HAMAP" id="MF_01353">
    <property type="entry name" value="NDH1_NDH1N"/>
    <property type="match status" value="1"/>
</dbReference>
<dbReference type="InterPro" id="IPR020874">
    <property type="entry name" value="NAD(P)H-quinone_OxRdtase_su_N"/>
</dbReference>
<dbReference type="PANTHER" id="PTHR35515">
    <property type="entry name" value="NAD(P)H-QUINONE OXIDOREDUCTASE SUBUNIT N, CHLOROPLASTIC"/>
    <property type="match status" value="1"/>
</dbReference>
<dbReference type="PANTHER" id="PTHR35515:SF1">
    <property type="entry name" value="NAD(P)H-QUINONE OXIDOREDUCTASE SUBUNIT N, CHLOROPLASTIC"/>
    <property type="match status" value="1"/>
</dbReference>
<dbReference type="Pfam" id="PF11909">
    <property type="entry name" value="NdhN"/>
    <property type="match status" value="1"/>
</dbReference>
<sequence>MHAPMPLLLTGRGFRRDLEANGCLAVHAPLEGGAETRLLRRLRGAGYRTRMTSARGLGDPEVFLTQKHGIRPPHLGHNCVGRGAAVGEVQQVVPLIGDLLDGDDSVALWILEGQVLSRSELLSLCDLCKREPRLRIIVEMGGARSLRWQPMKALLGA</sequence>
<proteinExistence type="inferred from homology"/>
<feature type="chain" id="PRO_0000352237" description="NAD(P)H-quinone oxidoreductase subunit N">
    <location>
        <begin position="1"/>
        <end position="157"/>
    </location>
</feature>
<name>NDHN_SYNS9</name>
<protein>
    <recommendedName>
        <fullName evidence="1">NAD(P)H-quinone oxidoreductase subunit N</fullName>
        <ecNumber evidence="1">7.1.1.-</ecNumber>
    </recommendedName>
    <alternativeName>
        <fullName evidence="1">NAD(P)H dehydrogenase I subunit N</fullName>
        <shortName evidence="1">NDH-1 subunit N</shortName>
        <shortName evidence="1">NDH-N</shortName>
    </alternativeName>
</protein>
<comment type="function">
    <text evidence="1">NDH-1 shuttles electrons from an unknown electron donor, via FMN and iron-sulfur (Fe-S) centers, to quinones in the respiratory and/or the photosynthetic chain. The immediate electron acceptor for the enzyme in this species is believed to be plastoquinone. Couples the redox reaction to proton translocation, and thus conserves the redox energy in a proton gradient. Cyanobacterial NDH-1 also plays a role in inorganic carbon-concentration.</text>
</comment>
<comment type="catalytic activity">
    <reaction evidence="1">
        <text>a plastoquinone + NADH + (n+1) H(+)(in) = a plastoquinol + NAD(+) + n H(+)(out)</text>
        <dbReference type="Rhea" id="RHEA:42608"/>
        <dbReference type="Rhea" id="RHEA-COMP:9561"/>
        <dbReference type="Rhea" id="RHEA-COMP:9562"/>
        <dbReference type="ChEBI" id="CHEBI:15378"/>
        <dbReference type="ChEBI" id="CHEBI:17757"/>
        <dbReference type="ChEBI" id="CHEBI:57540"/>
        <dbReference type="ChEBI" id="CHEBI:57945"/>
        <dbReference type="ChEBI" id="CHEBI:62192"/>
    </reaction>
</comment>
<comment type="catalytic activity">
    <reaction evidence="1">
        <text>a plastoquinone + NADPH + (n+1) H(+)(in) = a plastoquinol + NADP(+) + n H(+)(out)</text>
        <dbReference type="Rhea" id="RHEA:42612"/>
        <dbReference type="Rhea" id="RHEA-COMP:9561"/>
        <dbReference type="Rhea" id="RHEA-COMP:9562"/>
        <dbReference type="ChEBI" id="CHEBI:15378"/>
        <dbReference type="ChEBI" id="CHEBI:17757"/>
        <dbReference type="ChEBI" id="CHEBI:57783"/>
        <dbReference type="ChEBI" id="CHEBI:58349"/>
        <dbReference type="ChEBI" id="CHEBI:62192"/>
    </reaction>
</comment>
<comment type="subunit">
    <text evidence="1">NDH-1 can be composed of about 15 different subunits; different subcomplexes with different compositions have been identified which probably have different functions.</text>
</comment>
<comment type="subcellular location">
    <subcellularLocation>
        <location evidence="1">Cellular thylakoid membrane</location>
        <topology evidence="1">Peripheral membrane protein</topology>
        <orientation evidence="1">Cytoplasmic side</orientation>
    </subcellularLocation>
</comment>
<comment type="similarity">
    <text evidence="1">Belongs to the complex I NdhN subunit family.</text>
</comment>
<reference key="1">
    <citation type="submission" date="2005-08" db="EMBL/GenBank/DDBJ databases">
        <title>Complete sequence of Synechococcus sp. CC9902.</title>
        <authorList>
            <person name="Copeland A."/>
            <person name="Lucas S."/>
            <person name="Lapidus A."/>
            <person name="Barry K."/>
            <person name="Detter J.C."/>
            <person name="Glavina T."/>
            <person name="Hammon N."/>
            <person name="Israni S."/>
            <person name="Pitluck S."/>
            <person name="Martinez M."/>
            <person name="Schmutz J."/>
            <person name="Larimer F."/>
            <person name="Land M."/>
            <person name="Kyrpides N."/>
            <person name="Ivanova N."/>
            <person name="Richardson P."/>
        </authorList>
    </citation>
    <scope>NUCLEOTIDE SEQUENCE [LARGE SCALE GENOMIC DNA]</scope>
    <source>
        <strain>CC9902</strain>
    </source>
</reference>
<evidence type="ECO:0000255" key="1">
    <source>
        <dbReference type="HAMAP-Rule" id="MF_01353"/>
    </source>
</evidence>
<accession>Q3AUW5</accession>
<keyword id="KW-0472">Membrane</keyword>
<keyword id="KW-0520">NAD</keyword>
<keyword id="KW-0521">NADP</keyword>
<keyword id="KW-0618">Plastoquinone</keyword>
<keyword id="KW-0874">Quinone</keyword>
<keyword id="KW-1185">Reference proteome</keyword>
<keyword id="KW-0793">Thylakoid</keyword>
<keyword id="KW-1278">Translocase</keyword>
<keyword id="KW-0813">Transport</keyword>
<organism>
    <name type="scientific">Synechococcus sp. (strain CC9902)</name>
    <dbReference type="NCBI Taxonomy" id="316279"/>
    <lineage>
        <taxon>Bacteria</taxon>
        <taxon>Bacillati</taxon>
        <taxon>Cyanobacteriota</taxon>
        <taxon>Cyanophyceae</taxon>
        <taxon>Synechococcales</taxon>
        <taxon>Synechococcaceae</taxon>
        <taxon>Synechococcus</taxon>
    </lineage>
</organism>
<gene>
    <name evidence="1" type="primary">ndhN</name>
    <name type="ordered locus">Syncc9902_1953</name>
</gene>